<proteinExistence type="inferred from homology"/>
<gene>
    <name evidence="1" type="primary">leuS</name>
    <name type="ordered locus">MT0047</name>
</gene>
<feature type="chain" id="PRO_0000428473" description="Leucine--tRNA ligase">
    <location>
        <begin position="1"/>
        <end position="969"/>
    </location>
</feature>
<feature type="short sequence motif" description="'HIGH' region">
    <location>
        <begin position="78"/>
        <end position="89"/>
    </location>
</feature>
<feature type="short sequence motif" description="'KMSKS' region">
    <location>
        <begin position="739"/>
        <end position="743"/>
    </location>
</feature>
<feature type="binding site" evidence="1">
    <location>
        <position position="742"/>
    </location>
    <ligand>
        <name>ATP</name>
        <dbReference type="ChEBI" id="CHEBI:30616"/>
    </ligand>
</feature>
<protein>
    <recommendedName>
        <fullName evidence="1">Leucine--tRNA ligase</fullName>
        <ecNumber evidence="1">6.1.1.4</ecNumber>
    </recommendedName>
    <alternativeName>
        <fullName evidence="1">Leucyl-tRNA synthetase</fullName>
        <shortName evidence="1">LeuRS</shortName>
    </alternativeName>
</protein>
<comment type="catalytic activity">
    <reaction evidence="1">
        <text>tRNA(Leu) + L-leucine + ATP = L-leucyl-tRNA(Leu) + AMP + diphosphate</text>
        <dbReference type="Rhea" id="RHEA:11688"/>
        <dbReference type="Rhea" id="RHEA-COMP:9613"/>
        <dbReference type="Rhea" id="RHEA-COMP:9622"/>
        <dbReference type="ChEBI" id="CHEBI:30616"/>
        <dbReference type="ChEBI" id="CHEBI:33019"/>
        <dbReference type="ChEBI" id="CHEBI:57427"/>
        <dbReference type="ChEBI" id="CHEBI:78442"/>
        <dbReference type="ChEBI" id="CHEBI:78494"/>
        <dbReference type="ChEBI" id="CHEBI:456215"/>
        <dbReference type="EC" id="6.1.1.4"/>
    </reaction>
</comment>
<comment type="subcellular location">
    <subcellularLocation>
        <location evidence="1">Cytoplasm</location>
    </subcellularLocation>
</comment>
<comment type="similarity">
    <text evidence="1">Belongs to the class-I aminoacyl-tRNA synthetase family.</text>
</comment>
<sequence>MTESPTAGPGGVPRADDADSDVPRYRYTAELAARLERTWQENWARLGTFNVPNPVGSLAPPDGAAVPDDKLFVQDMFPYPSGEGLHVGHPLGYIATDVYARYFRMVGRNVLHALGFDAFGLPAEQYAVQTGTHPRTRTEANVVNFRRQLGRLGFGHDSRRSFSTTDVDFYRWTQWIFLQIYNAWFDTTANKARPISELVAEFESGARCLDGGRDWAKLTAGERADVIDEYRLVYRADSLVNWCPGLGTVLANEEVTADGRSDRGNFPVFRKRLRQWMMRITAYADRLLDDLDVLDWPEQVKTMQRNWIGRSTGAVALFSARAASDDGFEVDIEVFTTRPDTLFGATYLVLAPEHDLVDELVAASWPAGVNPLWTYGGGTPGEAIAAYRRAIAAKSDLERQESREKTGVFLGSYAINPANGEPVPIFIADYVLAGYGTGAIMAVPGHDQRDWDFARAFGLPIVEVIAGGNISESAYTGDGILVNSDYLNGMSVPAAKRAIVDRLESAGRGRARIEFKLRDWLFARQRYWGEPFPIVYDSDGRPHALDEAALPVELPDVPDYSPVLFDPDDADSEPSPPLAKATEWVHVDLDLGDGLKPYSRDTNVMPQWAGSSWYELRYTDPHNSERFCAKENEAYWMGPRPAEHGPDDPGGVDLYVGGAEHAVLHLLYSRFWHKVLYDLGHVSSREPYRRLVNQGYIQAYAYTDARGSYVPAEQVIERGDRFVYPGPDGEVEVFQEFGKIGKSLKNSVSPDEICDAYGADTLRVYEMSMGPLEASRPWATKDVVGAYRFLQRVWRLVVDEHTGETRVADGVELDIDTLRALHRTIVGVSEDFAALRNNTATAKLIEYTNHLTKKHRDAVPRAAVEPLVQMLAPLAPHIAEELWLRLGNTTSLAHGPFPKADAAYLVDETVEYPVQVNGKVRGRVVVAADTDEETLKAAVLTDEKVQAFLAGATPRKVIVVAGRLVNLVI</sequence>
<accession>P9WFV0</accession>
<accession>L0T451</accession>
<accession>P67510</accession>
<accession>P71698</accession>
<evidence type="ECO:0000255" key="1">
    <source>
        <dbReference type="HAMAP-Rule" id="MF_00049"/>
    </source>
</evidence>
<organism>
    <name type="scientific">Mycobacterium tuberculosis (strain CDC 1551 / Oshkosh)</name>
    <dbReference type="NCBI Taxonomy" id="83331"/>
    <lineage>
        <taxon>Bacteria</taxon>
        <taxon>Bacillati</taxon>
        <taxon>Actinomycetota</taxon>
        <taxon>Actinomycetes</taxon>
        <taxon>Mycobacteriales</taxon>
        <taxon>Mycobacteriaceae</taxon>
        <taxon>Mycobacterium</taxon>
        <taxon>Mycobacterium tuberculosis complex</taxon>
    </lineage>
</organism>
<keyword id="KW-0030">Aminoacyl-tRNA synthetase</keyword>
<keyword id="KW-0067">ATP-binding</keyword>
<keyword id="KW-0963">Cytoplasm</keyword>
<keyword id="KW-0436">Ligase</keyword>
<keyword id="KW-0547">Nucleotide-binding</keyword>
<keyword id="KW-0648">Protein biosynthesis</keyword>
<keyword id="KW-1185">Reference proteome</keyword>
<name>SYL_MYCTO</name>
<dbReference type="EC" id="6.1.1.4" evidence="1"/>
<dbReference type="EMBL" id="AE000516">
    <property type="protein sequence ID" value="AAK44269.1"/>
    <property type="molecule type" value="Genomic_DNA"/>
</dbReference>
<dbReference type="PIR" id="A70912">
    <property type="entry name" value="A70912"/>
</dbReference>
<dbReference type="RefSeq" id="WP_003900794.1">
    <property type="nucleotide sequence ID" value="NZ_KK341227.1"/>
</dbReference>
<dbReference type="SMR" id="P9WFV0"/>
<dbReference type="GeneID" id="45424000"/>
<dbReference type="KEGG" id="mtc:MT0047"/>
<dbReference type="PATRIC" id="fig|83331.31.peg.46"/>
<dbReference type="HOGENOM" id="CLU_004427_0_0_11"/>
<dbReference type="Proteomes" id="UP000001020">
    <property type="component" value="Chromosome"/>
</dbReference>
<dbReference type="GO" id="GO:0005829">
    <property type="term" value="C:cytosol"/>
    <property type="evidence" value="ECO:0007669"/>
    <property type="project" value="TreeGrafter"/>
</dbReference>
<dbReference type="GO" id="GO:0002161">
    <property type="term" value="F:aminoacyl-tRNA deacylase activity"/>
    <property type="evidence" value="ECO:0007669"/>
    <property type="project" value="InterPro"/>
</dbReference>
<dbReference type="GO" id="GO:0005524">
    <property type="term" value="F:ATP binding"/>
    <property type="evidence" value="ECO:0007669"/>
    <property type="project" value="UniProtKB-UniRule"/>
</dbReference>
<dbReference type="GO" id="GO:0004823">
    <property type="term" value="F:leucine-tRNA ligase activity"/>
    <property type="evidence" value="ECO:0007669"/>
    <property type="project" value="UniProtKB-UniRule"/>
</dbReference>
<dbReference type="GO" id="GO:0006429">
    <property type="term" value="P:leucyl-tRNA aminoacylation"/>
    <property type="evidence" value="ECO:0007669"/>
    <property type="project" value="UniProtKB-UniRule"/>
</dbReference>
<dbReference type="CDD" id="cd07958">
    <property type="entry name" value="Anticodon_Ia_Leu_BEm"/>
    <property type="match status" value="1"/>
</dbReference>
<dbReference type="FunFam" id="3.40.50.620:FF:000060">
    <property type="entry name" value="Leucine--tRNA ligase"/>
    <property type="match status" value="1"/>
</dbReference>
<dbReference type="FunFam" id="3.40.50.620:FF:000087">
    <property type="entry name" value="Leucine--tRNA ligase"/>
    <property type="match status" value="1"/>
</dbReference>
<dbReference type="FunFam" id="3.40.50.620:FF:000239">
    <property type="entry name" value="Leucine--tRNA ligase"/>
    <property type="match status" value="1"/>
</dbReference>
<dbReference type="FunFam" id="3.90.740.10:FF:000017">
    <property type="entry name" value="Leucine--tRNA ligase"/>
    <property type="match status" value="1"/>
</dbReference>
<dbReference type="FunFam" id="1.10.730.10:FF:000011">
    <property type="entry name" value="Leucine--tRNA ligase chloroplastic/mitochondrial"/>
    <property type="match status" value="1"/>
</dbReference>
<dbReference type="Gene3D" id="3.40.50.620">
    <property type="entry name" value="HUPs"/>
    <property type="match status" value="3"/>
</dbReference>
<dbReference type="Gene3D" id="1.10.730.10">
    <property type="entry name" value="Isoleucyl-tRNA Synthetase, Domain 1"/>
    <property type="match status" value="1"/>
</dbReference>
<dbReference type="Gene3D" id="3.90.740.10">
    <property type="entry name" value="Valyl/Leucyl/Isoleucyl-tRNA synthetase, editing domain"/>
    <property type="match status" value="1"/>
</dbReference>
<dbReference type="HAMAP" id="MF_00049_B">
    <property type="entry name" value="Leu_tRNA_synth_B"/>
    <property type="match status" value="1"/>
</dbReference>
<dbReference type="InterPro" id="IPR001412">
    <property type="entry name" value="aa-tRNA-synth_I_CS"/>
</dbReference>
<dbReference type="InterPro" id="IPR002302">
    <property type="entry name" value="Leu-tRNA-ligase"/>
</dbReference>
<dbReference type="InterPro" id="IPR025709">
    <property type="entry name" value="Leu_tRNA-synth_edit"/>
</dbReference>
<dbReference type="InterPro" id="IPR013155">
    <property type="entry name" value="M/V/L/I-tRNA-synth_anticd-bd"/>
</dbReference>
<dbReference type="InterPro" id="IPR015413">
    <property type="entry name" value="Methionyl/Leucyl_tRNA_Synth"/>
</dbReference>
<dbReference type="InterPro" id="IPR014729">
    <property type="entry name" value="Rossmann-like_a/b/a_fold"/>
</dbReference>
<dbReference type="InterPro" id="IPR009080">
    <property type="entry name" value="tRNAsynth_Ia_anticodon-bd"/>
</dbReference>
<dbReference type="InterPro" id="IPR009008">
    <property type="entry name" value="Val/Leu/Ile-tRNA-synth_edit"/>
</dbReference>
<dbReference type="NCBIfam" id="TIGR00396">
    <property type="entry name" value="leuS_bact"/>
    <property type="match status" value="1"/>
</dbReference>
<dbReference type="PANTHER" id="PTHR43740:SF2">
    <property type="entry name" value="LEUCINE--TRNA LIGASE, MITOCHONDRIAL"/>
    <property type="match status" value="1"/>
</dbReference>
<dbReference type="PANTHER" id="PTHR43740">
    <property type="entry name" value="LEUCYL-TRNA SYNTHETASE"/>
    <property type="match status" value="1"/>
</dbReference>
<dbReference type="Pfam" id="PF08264">
    <property type="entry name" value="Anticodon_1"/>
    <property type="match status" value="1"/>
</dbReference>
<dbReference type="Pfam" id="PF13603">
    <property type="entry name" value="tRNA-synt_1_2"/>
    <property type="match status" value="1"/>
</dbReference>
<dbReference type="Pfam" id="PF09334">
    <property type="entry name" value="tRNA-synt_1g"/>
    <property type="match status" value="1"/>
</dbReference>
<dbReference type="PRINTS" id="PR00985">
    <property type="entry name" value="TRNASYNTHLEU"/>
</dbReference>
<dbReference type="SUPFAM" id="SSF47323">
    <property type="entry name" value="Anticodon-binding domain of a subclass of class I aminoacyl-tRNA synthetases"/>
    <property type="match status" value="1"/>
</dbReference>
<dbReference type="SUPFAM" id="SSF52374">
    <property type="entry name" value="Nucleotidylyl transferase"/>
    <property type="match status" value="1"/>
</dbReference>
<dbReference type="SUPFAM" id="SSF50677">
    <property type="entry name" value="ValRS/IleRS/LeuRS editing domain"/>
    <property type="match status" value="1"/>
</dbReference>
<dbReference type="PROSITE" id="PS00178">
    <property type="entry name" value="AA_TRNA_LIGASE_I"/>
    <property type="match status" value="1"/>
</dbReference>
<reference key="1">
    <citation type="journal article" date="2002" name="J. Bacteriol.">
        <title>Whole-genome comparison of Mycobacterium tuberculosis clinical and laboratory strains.</title>
        <authorList>
            <person name="Fleischmann R.D."/>
            <person name="Alland D."/>
            <person name="Eisen J.A."/>
            <person name="Carpenter L."/>
            <person name="White O."/>
            <person name="Peterson J.D."/>
            <person name="DeBoy R.T."/>
            <person name="Dodson R.J."/>
            <person name="Gwinn M.L."/>
            <person name="Haft D.H."/>
            <person name="Hickey E.K."/>
            <person name="Kolonay J.F."/>
            <person name="Nelson W.C."/>
            <person name="Umayam L.A."/>
            <person name="Ermolaeva M.D."/>
            <person name="Salzberg S.L."/>
            <person name="Delcher A."/>
            <person name="Utterback T.R."/>
            <person name="Weidman J.F."/>
            <person name="Khouri H.M."/>
            <person name="Gill J."/>
            <person name="Mikula A."/>
            <person name="Bishai W."/>
            <person name="Jacobs W.R. Jr."/>
            <person name="Venter J.C."/>
            <person name="Fraser C.M."/>
        </authorList>
    </citation>
    <scope>NUCLEOTIDE SEQUENCE [LARGE SCALE GENOMIC DNA]</scope>
    <source>
        <strain>CDC 1551 / Oshkosh</strain>
    </source>
</reference>